<dbReference type="EC" id="2.3.2.27"/>
<dbReference type="EMBL" id="BC134423">
    <property type="protein sequence ID" value="AAI34424.1"/>
    <property type="molecule type" value="mRNA"/>
</dbReference>
<dbReference type="EMBL" id="AAFC03054408">
    <property type="status" value="NOT_ANNOTATED_CDS"/>
    <property type="molecule type" value="Genomic_DNA"/>
</dbReference>
<dbReference type="RefSeq" id="NP_001077204.1">
    <property type="nucleotide sequence ID" value="NM_001083735.2"/>
</dbReference>
<dbReference type="SMR" id="A4IF63"/>
<dbReference type="FunCoup" id="A4IF63">
    <property type="interactions" value="2000"/>
</dbReference>
<dbReference type="STRING" id="9913.ENSBTAP00000011609"/>
<dbReference type="PaxDb" id="9913-ENSBTAP00000011609"/>
<dbReference type="GeneID" id="538617"/>
<dbReference type="KEGG" id="bta:538617"/>
<dbReference type="CTD" id="23321"/>
<dbReference type="VEuPathDB" id="HostDB:ENSBTAG00000008816"/>
<dbReference type="eggNOG" id="KOG2177">
    <property type="taxonomic scope" value="Eukaryota"/>
</dbReference>
<dbReference type="HOGENOM" id="CLU_008645_5_0_1"/>
<dbReference type="InParanoid" id="A4IF63"/>
<dbReference type="OMA" id="ECRLRFG"/>
<dbReference type="OrthoDB" id="342730at2759"/>
<dbReference type="TreeFam" id="TF331018"/>
<dbReference type="UniPathway" id="UPA00143"/>
<dbReference type="Proteomes" id="UP000009136">
    <property type="component" value="Chromosome 17"/>
</dbReference>
<dbReference type="Bgee" id="ENSBTAG00000008816">
    <property type="expression patterns" value="Expressed in occipital lobe and 107 other cell types or tissues"/>
</dbReference>
<dbReference type="GO" id="GO:0005737">
    <property type="term" value="C:cytoplasm"/>
    <property type="evidence" value="ECO:0007669"/>
    <property type="project" value="UniProtKB-SubCell"/>
</dbReference>
<dbReference type="GO" id="GO:0061630">
    <property type="term" value="F:ubiquitin protein ligase activity"/>
    <property type="evidence" value="ECO:0000318"/>
    <property type="project" value="GO_Central"/>
</dbReference>
<dbReference type="GO" id="GO:0004842">
    <property type="term" value="F:ubiquitin-protein transferase activity"/>
    <property type="evidence" value="ECO:0000250"/>
    <property type="project" value="UniProtKB"/>
</dbReference>
<dbReference type="GO" id="GO:0008270">
    <property type="term" value="F:zinc ion binding"/>
    <property type="evidence" value="ECO:0007669"/>
    <property type="project" value="UniProtKB-KW"/>
</dbReference>
<dbReference type="GO" id="GO:0043161">
    <property type="term" value="P:proteasome-mediated ubiquitin-dependent protein catabolic process"/>
    <property type="evidence" value="ECO:0000318"/>
    <property type="project" value="GO_Central"/>
</dbReference>
<dbReference type="GO" id="GO:0000209">
    <property type="term" value="P:protein polyubiquitination"/>
    <property type="evidence" value="ECO:0000318"/>
    <property type="project" value="GO_Central"/>
</dbReference>
<dbReference type="GO" id="GO:0043523">
    <property type="term" value="P:regulation of neuron apoptotic process"/>
    <property type="evidence" value="ECO:0000250"/>
    <property type="project" value="UniProtKB"/>
</dbReference>
<dbReference type="CDD" id="cd19824">
    <property type="entry name" value="Bbox2_TRIM2_C-VII"/>
    <property type="match status" value="1"/>
</dbReference>
<dbReference type="CDD" id="cd14960">
    <property type="entry name" value="NHL_TRIM2_like"/>
    <property type="match status" value="1"/>
</dbReference>
<dbReference type="CDD" id="cd16767">
    <property type="entry name" value="RING-HC_TRIM2"/>
    <property type="match status" value="1"/>
</dbReference>
<dbReference type="FunFam" id="2.120.10.30:FF:000007">
    <property type="entry name" value="Putative tripartite motif-containing protein 2"/>
    <property type="match status" value="1"/>
</dbReference>
<dbReference type="FunFam" id="2.120.10.30:FF:000004">
    <property type="entry name" value="Tripartite motif containing 2"/>
    <property type="match status" value="1"/>
</dbReference>
<dbReference type="FunFam" id="3.30.40.10:FF:000032">
    <property type="entry name" value="Tripartite motif containing 2"/>
    <property type="match status" value="1"/>
</dbReference>
<dbReference type="FunFam" id="2.60.40.10:FF:000198">
    <property type="entry name" value="Tripartite motif-containing protein 2"/>
    <property type="match status" value="1"/>
</dbReference>
<dbReference type="FunFam" id="3.30.160.60:FF:000154">
    <property type="entry name" value="Tripartite motif-containing protein 2"/>
    <property type="match status" value="1"/>
</dbReference>
<dbReference type="Gene3D" id="3.30.160.60">
    <property type="entry name" value="Classic Zinc Finger"/>
    <property type="match status" value="1"/>
</dbReference>
<dbReference type="Gene3D" id="2.60.40.10">
    <property type="entry name" value="Immunoglobulins"/>
    <property type="match status" value="1"/>
</dbReference>
<dbReference type="Gene3D" id="2.120.10.30">
    <property type="entry name" value="TolB, C-terminal domain"/>
    <property type="match status" value="2"/>
</dbReference>
<dbReference type="Gene3D" id="3.30.40.10">
    <property type="entry name" value="Zinc/RING finger domain, C3HC4 (zinc finger)"/>
    <property type="match status" value="1"/>
</dbReference>
<dbReference type="InterPro" id="IPR011042">
    <property type="entry name" value="6-blade_b-propeller_TolB-like"/>
</dbReference>
<dbReference type="InterPro" id="IPR003649">
    <property type="entry name" value="Bbox_C"/>
</dbReference>
<dbReference type="InterPro" id="IPR017868">
    <property type="entry name" value="Filamin/ABP280_repeat-like"/>
</dbReference>
<dbReference type="InterPro" id="IPR001298">
    <property type="entry name" value="Filamin/ABP280_rpt"/>
</dbReference>
<dbReference type="InterPro" id="IPR013783">
    <property type="entry name" value="Ig-like_fold"/>
</dbReference>
<dbReference type="InterPro" id="IPR014756">
    <property type="entry name" value="Ig_E-set"/>
</dbReference>
<dbReference type="InterPro" id="IPR001258">
    <property type="entry name" value="NHL_repeat"/>
</dbReference>
<dbReference type="InterPro" id="IPR050952">
    <property type="entry name" value="TRIM-NHL_E3_ligases"/>
</dbReference>
<dbReference type="InterPro" id="IPR027370">
    <property type="entry name" value="Znf-RING_euk"/>
</dbReference>
<dbReference type="InterPro" id="IPR000315">
    <property type="entry name" value="Znf_B-box"/>
</dbReference>
<dbReference type="InterPro" id="IPR001841">
    <property type="entry name" value="Znf_RING"/>
</dbReference>
<dbReference type="InterPro" id="IPR013083">
    <property type="entry name" value="Znf_RING/FYVE/PHD"/>
</dbReference>
<dbReference type="InterPro" id="IPR017907">
    <property type="entry name" value="Znf_RING_CS"/>
</dbReference>
<dbReference type="PANTHER" id="PTHR24104">
    <property type="entry name" value="E3 UBIQUITIN-PROTEIN LIGASE NHLRC1-RELATED"/>
    <property type="match status" value="1"/>
</dbReference>
<dbReference type="PANTHER" id="PTHR24104:SF58">
    <property type="entry name" value="TRIPARTITE MOTIF-CONTAINING PROTEIN 2"/>
    <property type="match status" value="1"/>
</dbReference>
<dbReference type="Pfam" id="PF00630">
    <property type="entry name" value="Filamin"/>
    <property type="match status" value="1"/>
</dbReference>
<dbReference type="Pfam" id="PF01436">
    <property type="entry name" value="NHL"/>
    <property type="match status" value="6"/>
</dbReference>
<dbReference type="Pfam" id="PF00643">
    <property type="entry name" value="zf-B_box"/>
    <property type="match status" value="1"/>
</dbReference>
<dbReference type="Pfam" id="PF13445">
    <property type="entry name" value="zf-RING_UBOX"/>
    <property type="match status" value="1"/>
</dbReference>
<dbReference type="SMART" id="SM00502">
    <property type="entry name" value="BBC"/>
    <property type="match status" value="1"/>
</dbReference>
<dbReference type="SMART" id="SM00336">
    <property type="entry name" value="BBOX"/>
    <property type="match status" value="1"/>
</dbReference>
<dbReference type="SMART" id="SM00557">
    <property type="entry name" value="IG_FLMN"/>
    <property type="match status" value="1"/>
</dbReference>
<dbReference type="SMART" id="SM00184">
    <property type="entry name" value="RING"/>
    <property type="match status" value="1"/>
</dbReference>
<dbReference type="SUPFAM" id="SSF57845">
    <property type="entry name" value="B-box zinc-binding domain"/>
    <property type="match status" value="1"/>
</dbReference>
<dbReference type="SUPFAM" id="SSF81296">
    <property type="entry name" value="E set domains"/>
    <property type="match status" value="1"/>
</dbReference>
<dbReference type="SUPFAM" id="SSF101898">
    <property type="entry name" value="NHL repeat"/>
    <property type="match status" value="1"/>
</dbReference>
<dbReference type="SUPFAM" id="SSF57850">
    <property type="entry name" value="RING/U-box"/>
    <property type="match status" value="1"/>
</dbReference>
<dbReference type="PROSITE" id="PS50194">
    <property type="entry name" value="FILAMIN_REPEAT"/>
    <property type="match status" value="1"/>
</dbReference>
<dbReference type="PROSITE" id="PS51125">
    <property type="entry name" value="NHL"/>
    <property type="match status" value="6"/>
</dbReference>
<dbReference type="PROSITE" id="PS50119">
    <property type="entry name" value="ZF_BBOX"/>
    <property type="match status" value="1"/>
</dbReference>
<dbReference type="PROSITE" id="PS00518">
    <property type="entry name" value="ZF_RING_1"/>
    <property type="match status" value="1"/>
</dbReference>
<dbReference type="PROSITE" id="PS50089">
    <property type="entry name" value="ZF_RING_2"/>
    <property type="match status" value="1"/>
</dbReference>
<accession>A4IF63</accession>
<evidence type="ECO:0000250" key="1">
    <source>
        <dbReference type="UniProtKB" id="D3ZQG6"/>
    </source>
</evidence>
<evidence type="ECO:0000250" key="2">
    <source>
        <dbReference type="UniProtKB" id="Q9C040"/>
    </source>
</evidence>
<evidence type="ECO:0000250" key="3">
    <source>
        <dbReference type="UniProtKB" id="Q9ESN6"/>
    </source>
</evidence>
<evidence type="ECO:0000255" key="4">
    <source>
        <dbReference type="PROSITE-ProRule" id="PRU00024"/>
    </source>
</evidence>
<evidence type="ECO:0000255" key="5">
    <source>
        <dbReference type="PROSITE-ProRule" id="PRU00175"/>
    </source>
</evidence>
<evidence type="ECO:0000256" key="6">
    <source>
        <dbReference type="SAM" id="MobiDB-lite"/>
    </source>
</evidence>
<evidence type="ECO:0000305" key="7"/>
<comment type="function">
    <text evidence="2 3">UBE2D1-dependent E3 ubiquitin-protein ligase that mediates the ubiquitination of NEFL and of phosphorylated BCL2L11. Plays a neuroprotective function. May play a role in neuronal rapid ischemic tolerance. Plays a role in antiviral immunity and limits New World arenavirus infection independently of its ubiquitin ligase activity.</text>
</comment>
<comment type="catalytic activity">
    <reaction>
        <text>S-ubiquitinyl-[E2 ubiquitin-conjugating enzyme]-L-cysteine + [acceptor protein]-L-lysine = [E2 ubiquitin-conjugating enzyme]-L-cysteine + N(6)-ubiquitinyl-[acceptor protein]-L-lysine.</text>
        <dbReference type="EC" id="2.3.2.27"/>
    </reaction>
</comment>
<comment type="pathway">
    <text>Protein modification; protein ubiquitination.</text>
</comment>
<comment type="subunit">
    <text evidence="2 3">Forms homooligomers (By similarity). Interacts with TRIM3; this interaction reduces TRIM2 activity (By similarity). Interacts with myosin V; myosin V may not be a substrate for ubiquitination. Interacts with NEFL. Interacts with phosphorylated BCL2L11. Interacts with SIRPA (By similarity).</text>
</comment>
<comment type="subcellular location">
    <subcellularLocation>
        <location evidence="3">Cytoplasm</location>
    </subcellularLocation>
</comment>
<comment type="domain">
    <text evidence="3">The interaction with myosin V is dependent upon its NHL repeats, which form a beta-propeller (NHL) domain containing six blades.</text>
</comment>
<comment type="PTM">
    <text evidence="3">RING-type zinc finger-dependent and UBE2D1-dependent autoubiquitination.</text>
</comment>
<comment type="similarity">
    <text evidence="7">Belongs to the TRIM/RBCC family.</text>
</comment>
<proteinExistence type="evidence at transcript level"/>
<protein>
    <recommendedName>
        <fullName>Tripartite motif-containing protein 2</fullName>
        <ecNumber>2.3.2.27</ecNumber>
    </recommendedName>
    <alternativeName>
        <fullName>E3 ubiquitin-protein ligase TRIM2</fullName>
    </alternativeName>
    <alternativeName>
        <fullName evidence="7">RING-type E3 ubiquitin transferase TRIM2</fullName>
    </alternativeName>
</protein>
<reference key="1">
    <citation type="journal article" date="2009" name="Science">
        <title>The genome sequence of taurine cattle: a window to ruminant biology and evolution.</title>
        <authorList>
            <consortium name="The bovine genome sequencing and analysis consortium"/>
        </authorList>
    </citation>
    <scope>NUCLEOTIDE SEQUENCE [LARGE SCALE GENOMIC DNA]</scope>
    <source>
        <strain>Hereford</strain>
    </source>
</reference>
<reference key="2">
    <citation type="submission" date="2007-03" db="EMBL/GenBank/DDBJ databases">
        <authorList>
            <consortium name="NIH - Mammalian Gene Collection (MGC) project"/>
        </authorList>
    </citation>
    <scope>NUCLEOTIDE SEQUENCE [LARGE SCALE MRNA]</scope>
    <source>
        <strain>Hereford</strain>
        <tissue>Hypothalamus</tissue>
    </source>
</reference>
<gene>
    <name type="primary">TRIM2</name>
</gene>
<sequence length="744" mass="81476">MASEATNIPSPVVRQIDKQFLICSICLERYKNPKVLPCLHTFCERCLQNYIPAHSLTLSCPVCRQTSILPEKGVAALQNNFFITNLMDVLQRSPGSSAEESSILETVTAVAAGKPLSCPNHDGNVMDFYCQSCETAMCRECTEGEHAEHPTVPLKDVVEQHKASLQVQLDAANRRLPEIDSALQFISEIIHQLTNQKASIVDDIHSTFDELQKTLNVRKSVLLMELEVNYGLKHKVLQSQLDTLLEGQESIKSCSNFTAQALNHGTETEVLLVKKQMSEKLNELADQDFPLHPRENDQLDFIVETEGLKKSIHNLGTILTTNAVASETVATGEGLRQTIIGQPMSVTITTKDKDGELCKTGNAYLTAELSTPDGSVADGEILDNKNGTYEFLYTVQKEGDFTLSLRLYDQHIRGSPFKLKVIRSADVSPTTEGVKRRVKSPGSGHVKQKAVKRPASMYSTGKRKENPIEDDLIFRVGTKGRNKGEFTNLQGVAASTNGKILIADSNNQCVQIFSNDGQFKSRFGIRGRSPGQLQRPTGVAVHPSGDIIIADYDNKWVSIFSSDGKFKTKIGSGKLMGPKGVSVDRNGHIIVVDNKACCVFIFQPNGKIVTRFGSRGNGDRQFAGPHFAAVNSNNEIIVTDFHNHSVKVFNQEGEFMLKFGSNGEGNGQFNAPTGVAVDSNGNIIVADWGNSRIQVFDGSGSFLSYINTSADPLYGPQGLALTSDGHVVVADSGNHCFKVYRYLQ</sequence>
<name>TRIM2_BOVIN</name>
<keyword id="KW-0963">Cytoplasm</keyword>
<keyword id="KW-0479">Metal-binding</keyword>
<keyword id="KW-0597">Phosphoprotein</keyword>
<keyword id="KW-1185">Reference proteome</keyword>
<keyword id="KW-0677">Repeat</keyword>
<keyword id="KW-0808">Transferase</keyword>
<keyword id="KW-0832">Ubl conjugation</keyword>
<keyword id="KW-0833">Ubl conjugation pathway</keyword>
<keyword id="KW-0862">Zinc</keyword>
<keyword id="KW-0863">Zinc-finger</keyword>
<feature type="chain" id="PRO_0000413606" description="Tripartite motif-containing protein 2">
    <location>
        <begin position="1"/>
        <end position="744"/>
    </location>
</feature>
<feature type="repeat" description="Filamin">
    <location>
        <begin position="320"/>
        <end position="421"/>
    </location>
</feature>
<feature type="repeat" description="NHL 1">
    <location>
        <begin position="473"/>
        <end position="516"/>
    </location>
</feature>
<feature type="repeat" description="NHL 2">
    <location>
        <begin position="520"/>
        <end position="563"/>
    </location>
</feature>
<feature type="repeat" description="NHL 3">
    <location>
        <begin position="564"/>
        <end position="605"/>
    </location>
</feature>
<feature type="repeat" description="NHL 4">
    <location>
        <begin position="609"/>
        <end position="652"/>
    </location>
</feature>
<feature type="repeat" description="NHL 5">
    <location>
        <begin position="656"/>
        <end position="699"/>
    </location>
</feature>
<feature type="repeat" description="NHL 6">
    <location>
        <begin position="700"/>
        <end position="743"/>
    </location>
</feature>
<feature type="zinc finger region" description="RING-type" evidence="5">
    <location>
        <begin position="23"/>
        <end position="64"/>
    </location>
</feature>
<feature type="zinc finger region" description="B box-type" evidence="4">
    <location>
        <begin position="113"/>
        <end position="154"/>
    </location>
</feature>
<feature type="region of interest" description="Disordered" evidence="6">
    <location>
        <begin position="432"/>
        <end position="462"/>
    </location>
</feature>
<feature type="binding site" evidence="4">
    <location>
        <position position="118"/>
    </location>
    <ligand>
        <name>Zn(2+)</name>
        <dbReference type="ChEBI" id="CHEBI:29105"/>
    </ligand>
</feature>
<feature type="binding site" evidence="4">
    <location>
        <position position="121"/>
    </location>
    <ligand>
        <name>Zn(2+)</name>
        <dbReference type="ChEBI" id="CHEBI:29105"/>
    </ligand>
</feature>
<feature type="binding site" evidence="4">
    <location>
        <position position="141"/>
    </location>
    <ligand>
        <name>Zn(2+)</name>
        <dbReference type="ChEBI" id="CHEBI:29105"/>
    </ligand>
</feature>
<feature type="binding site" evidence="4">
    <location>
        <position position="146"/>
    </location>
    <ligand>
        <name>Zn(2+)</name>
        <dbReference type="ChEBI" id="CHEBI:29105"/>
    </ligand>
</feature>
<feature type="modified residue" description="Phosphoserine" evidence="1">
    <location>
        <position position="10"/>
    </location>
</feature>
<feature type="modified residue" description="Phosphothreonine" evidence="3">
    <location>
        <position position="371"/>
    </location>
</feature>
<feature type="modified residue" description="Phosphoserine" evidence="3">
    <location>
        <position position="375"/>
    </location>
</feature>
<feature type="modified residue" description="Phosphoserine" evidence="3">
    <location>
        <position position="424"/>
    </location>
</feature>
<feature type="modified residue" description="Phosphoserine" evidence="3">
    <location>
        <position position="428"/>
    </location>
</feature>
<organism>
    <name type="scientific">Bos taurus</name>
    <name type="common">Bovine</name>
    <dbReference type="NCBI Taxonomy" id="9913"/>
    <lineage>
        <taxon>Eukaryota</taxon>
        <taxon>Metazoa</taxon>
        <taxon>Chordata</taxon>
        <taxon>Craniata</taxon>
        <taxon>Vertebrata</taxon>
        <taxon>Euteleostomi</taxon>
        <taxon>Mammalia</taxon>
        <taxon>Eutheria</taxon>
        <taxon>Laurasiatheria</taxon>
        <taxon>Artiodactyla</taxon>
        <taxon>Ruminantia</taxon>
        <taxon>Pecora</taxon>
        <taxon>Bovidae</taxon>
        <taxon>Bovinae</taxon>
        <taxon>Bos</taxon>
    </lineage>
</organism>